<reference key="1">
    <citation type="journal article" date="2004" name="Nature">
        <title>Genome evolution in yeasts.</title>
        <authorList>
            <person name="Dujon B."/>
            <person name="Sherman D."/>
            <person name="Fischer G."/>
            <person name="Durrens P."/>
            <person name="Casaregola S."/>
            <person name="Lafontaine I."/>
            <person name="de Montigny J."/>
            <person name="Marck C."/>
            <person name="Neuveglise C."/>
            <person name="Talla E."/>
            <person name="Goffard N."/>
            <person name="Frangeul L."/>
            <person name="Aigle M."/>
            <person name="Anthouard V."/>
            <person name="Babour A."/>
            <person name="Barbe V."/>
            <person name="Barnay S."/>
            <person name="Blanchin S."/>
            <person name="Beckerich J.-M."/>
            <person name="Beyne E."/>
            <person name="Bleykasten C."/>
            <person name="Boisrame A."/>
            <person name="Boyer J."/>
            <person name="Cattolico L."/>
            <person name="Confanioleri F."/>
            <person name="de Daruvar A."/>
            <person name="Despons L."/>
            <person name="Fabre E."/>
            <person name="Fairhead C."/>
            <person name="Ferry-Dumazet H."/>
            <person name="Groppi A."/>
            <person name="Hantraye F."/>
            <person name="Hennequin C."/>
            <person name="Jauniaux N."/>
            <person name="Joyet P."/>
            <person name="Kachouri R."/>
            <person name="Kerrest A."/>
            <person name="Koszul R."/>
            <person name="Lemaire M."/>
            <person name="Lesur I."/>
            <person name="Ma L."/>
            <person name="Muller H."/>
            <person name="Nicaud J.-M."/>
            <person name="Nikolski M."/>
            <person name="Oztas S."/>
            <person name="Ozier-Kalogeropoulos O."/>
            <person name="Pellenz S."/>
            <person name="Potier S."/>
            <person name="Richard G.-F."/>
            <person name="Straub M.-L."/>
            <person name="Suleau A."/>
            <person name="Swennen D."/>
            <person name="Tekaia F."/>
            <person name="Wesolowski-Louvel M."/>
            <person name="Westhof E."/>
            <person name="Wirth B."/>
            <person name="Zeniou-Meyer M."/>
            <person name="Zivanovic Y."/>
            <person name="Bolotin-Fukuhara M."/>
            <person name="Thierry A."/>
            <person name="Bouchier C."/>
            <person name="Caudron B."/>
            <person name="Scarpelli C."/>
            <person name="Gaillardin C."/>
            <person name="Weissenbach J."/>
            <person name="Wincker P."/>
            <person name="Souciet J.-L."/>
        </authorList>
    </citation>
    <scope>NUCLEOTIDE SEQUENCE [LARGE SCALE GENOMIC DNA]</scope>
    <source>
        <strain>CLIB 122 / E 150</strain>
    </source>
</reference>
<proteinExistence type="inferred from homology"/>
<accession>Q6C8L8</accession>
<sequence length="806" mass="90675">MSDDYDPTAVAFKPGDMETDMNTGEPLALEAEAAAKDPAHNEESGEDTNANVESGTLVHQGDEPESIDKEDKVEDGPDTKSDGGVLDEPKDGEQRDDEKKEEHKPENPSEEVAEDDDYVPAAVSEPVEEDSAGGGSVGGTGIPDGAISSLAASTTIPPPSDPNQVGGGASSTSNNNNSGPDNNKRKRLATDTIGILEDRIAANPRDMPAWLDLISTIVRKEKLDESRDIYERFLALYPLSAEIWIEYITLEMDNGEFKRLEQLFGRCLTRLPNLKLWNIYLTYVRRVNVLSSESDKITEARTNIIKAFEFYLDHVGIDRESGNVWFEYLDFIKSKPATTTWEEQQKNDLTRKIYRKAIGIPLNNLSILWTAYTNFEYSLNKATARKFINEKSGSCQNARQCQTVLENLMRGLDRSSVPKSGPRDEFQVRAWKKWIDWEKSNPLGTDNKAETNKRLLYCLKQAVMSLQFVPEIWFLAAEYCFDDPLLKTEALQFLKDGLSLNPNSSLLAFRLAEYYEREADAEKMRTIYDEHIESLGKERQALIEAQGDPEAEPTAEIIKLNTQISIAYSVCMKAVKRFEGIKPGRMVFKKARNTGFATYHIYVASALMEFHHNKNPTVATNVFELGLKYCGSNAAYVQHYLDFLISLHDDTNARALFEKTIPLLGPSDAASLIKSMIKFESDFGEITSVVKLQDRLRQLNPDTSPITIIADRFATSDFDVIRQCDMLQKPKSRTDEDSDSERPSKRARRTSHGNDQGDKMEPFNLPQKIDALLRQLPNSSDYGEATFDPQRLVDLFRDVRIPDGLL</sequence>
<organism>
    <name type="scientific">Yarrowia lipolytica (strain CLIB 122 / E 150)</name>
    <name type="common">Yeast</name>
    <name type="synonym">Candida lipolytica</name>
    <dbReference type="NCBI Taxonomy" id="284591"/>
    <lineage>
        <taxon>Eukaryota</taxon>
        <taxon>Fungi</taxon>
        <taxon>Dikarya</taxon>
        <taxon>Ascomycota</taxon>
        <taxon>Saccharomycotina</taxon>
        <taxon>Dipodascomycetes</taxon>
        <taxon>Dipodascales</taxon>
        <taxon>Dipodascales incertae sedis</taxon>
        <taxon>Yarrowia</taxon>
    </lineage>
</organism>
<feature type="chain" id="PRO_0000238530" description="mRNA 3'-end-processing protein RNA14">
    <location>
        <begin position="1"/>
        <end position="806"/>
    </location>
</feature>
<feature type="repeat" description="HAT 1">
    <location>
        <begin position="221"/>
        <end position="253"/>
    </location>
</feature>
<feature type="repeat" description="HAT 2">
    <location>
        <begin position="255"/>
        <end position="286"/>
    </location>
</feature>
<feature type="repeat" description="HAT 3">
    <location>
        <begin position="299"/>
        <end position="334"/>
    </location>
</feature>
<feature type="repeat" description="HAT 4">
    <location>
        <begin position="345"/>
        <end position="378"/>
    </location>
</feature>
<feature type="repeat" description="HAT 5">
    <location>
        <begin position="404"/>
        <end position="440"/>
    </location>
</feature>
<feature type="region of interest" description="Disordered" evidence="2">
    <location>
        <begin position="1"/>
        <end position="187"/>
    </location>
</feature>
<feature type="region of interest" description="Disordered" evidence="2">
    <location>
        <begin position="729"/>
        <end position="770"/>
    </location>
</feature>
<feature type="compositionally biased region" description="Basic and acidic residues" evidence="2">
    <location>
        <begin position="33"/>
        <end position="43"/>
    </location>
</feature>
<feature type="compositionally biased region" description="Basic and acidic residues" evidence="2">
    <location>
        <begin position="60"/>
        <end position="107"/>
    </location>
</feature>
<feature type="compositionally biased region" description="Acidic residues" evidence="2">
    <location>
        <begin position="108"/>
        <end position="118"/>
    </location>
</feature>
<feature type="compositionally biased region" description="Gly residues" evidence="2">
    <location>
        <begin position="132"/>
        <end position="142"/>
    </location>
</feature>
<feature type="compositionally biased region" description="Low complexity" evidence="2">
    <location>
        <begin position="170"/>
        <end position="181"/>
    </location>
</feature>
<feature type="compositionally biased region" description="Basic and acidic residues" evidence="2">
    <location>
        <begin position="732"/>
        <end position="744"/>
    </location>
</feature>
<name>RNA14_YARLI</name>
<comment type="function">
    <text evidence="1">Component of the cleavage factor IA (CFIA) complex, which is involved in the endonucleolytic cleavage during polyadenylation-dependent pre-mRNA 3'-end formation.</text>
</comment>
<comment type="subcellular location">
    <subcellularLocation>
        <location evidence="1">Nucleus</location>
    </subcellularLocation>
    <subcellularLocation>
        <location evidence="1">Cytoplasm</location>
    </subcellularLocation>
    <text evidence="1">Nucleus and/or cytoplasm.</text>
</comment>
<gene>
    <name type="primary">RNA14</name>
    <name type="ordered locus">YALI0D18612g</name>
</gene>
<evidence type="ECO:0000250" key="1"/>
<evidence type="ECO:0000256" key="2">
    <source>
        <dbReference type="SAM" id="MobiDB-lite"/>
    </source>
</evidence>
<dbReference type="EMBL" id="CR382130">
    <property type="protein sequence ID" value="CAG81186.1"/>
    <property type="molecule type" value="Genomic_DNA"/>
</dbReference>
<dbReference type="RefSeq" id="XP_502994.1">
    <property type="nucleotide sequence ID" value="XM_502994.1"/>
</dbReference>
<dbReference type="SMR" id="Q6C8L8"/>
<dbReference type="FunCoup" id="Q6C8L8">
    <property type="interactions" value="1213"/>
</dbReference>
<dbReference type="STRING" id="284591.Q6C8L8"/>
<dbReference type="EnsemblFungi" id="CAG81186">
    <property type="protein sequence ID" value="CAG81186"/>
    <property type="gene ID" value="YALI0_D18612g"/>
</dbReference>
<dbReference type="KEGG" id="yli:2911125"/>
<dbReference type="VEuPathDB" id="FungiDB:YALI0_D18612g"/>
<dbReference type="HOGENOM" id="CLU_007630_0_1_1"/>
<dbReference type="InParanoid" id="Q6C8L8"/>
<dbReference type="OMA" id="PKRQYFK"/>
<dbReference type="OrthoDB" id="109562at4891"/>
<dbReference type="Proteomes" id="UP000001300">
    <property type="component" value="Chromosome D"/>
</dbReference>
<dbReference type="GO" id="GO:0005737">
    <property type="term" value="C:cytoplasm"/>
    <property type="evidence" value="ECO:0007669"/>
    <property type="project" value="UniProtKB-SubCell"/>
</dbReference>
<dbReference type="GO" id="GO:0005634">
    <property type="term" value="C:nucleus"/>
    <property type="evidence" value="ECO:0000318"/>
    <property type="project" value="GO_Central"/>
</dbReference>
<dbReference type="GO" id="GO:0003729">
    <property type="term" value="F:mRNA binding"/>
    <property type="evidence" value="ECO:0000318"/>
    <property type="project" value="GO_Central"/>
</dbReference>
<dbReference type="GO" id="GO:0031124">
    <property type="term" value="P:mRNA 3'-end processing"/>
    <property type="evidence" value="ECO:0007669"/>
    <property type="project" value="InterPro"/>
</dbReference>
<dbReference type="GO" id="GO:0031123">
    <property type="term" value="P:RNA 3'-end processing"/>
    <property type="evidence" value="ECO:0000318"/>
    <property type="project" value="GO_Central"/>
</dbReference>
<dbReference type="Gene3D" id="1.25.40.1040">
    <property type="match status" value="1"/>
</dbReference>
<dbReference type="InterPro" id="IPR003107">
    <property type="entry name" value="HAT"/>
</dbReference>
<dbReference type="InterPro" id="IPR045243">
    <property type="entry name" value="Rna14-like"/>
</dbReference>
<dbReference type="InterPro" id="IPR008847">
    <property type="entry name" value="Suf"/>
</dbReference>
<dbReference type="InterPro" id="IPR011990">
    <property type="entry name" value="TPR-like_helical_dom_sf"/>
</dbReference>
<dbReference type="PANTHER" id="PTHR19980:SF0">
    <property type="entry name" value="CLEAVAGE STIMULATION FACTOR SUBUNIT 3"/>
    <property type="match status" value="1"/>
</dbReference>
<dbReference type="PANTHER" id="PTHR19980">
    <property type="entry name" value="RNA CLEAVAGE STIMULATION FACTOR"/>
    <property type="match status" value="1"/>
</dbReference>
<dbReference type="Pfam" id="PF05843">
    <property type="entry name" value="Suf"/>
    <property type="match status" value="1"/>
</dbReference>
<dbReference type="SMART" id="SM00386">
    <property type="entry name" value="HAT"/>
    <property type="match status" value="7"/>
</dbReference>
<dbReference type="SUPFAM" id="SSF48452">
    <property type="entry name" value="TPR-like"/>
    <property type="match status" value="1"/>
</dbReference>
<keyword id="KW-0963">Cytoplasm</keyword>
<keyword id="KW-0507">mRNA processing</keyword>
<keyword id="KW-0539">Nucleus</keyword>
<keyword id="KW-1185">Reference proteome</keyword>
<keyword id="KW-0677">Repeat</keyword>
<protein>
    <recommendedName>
        <fullName>mRNA 3'-end-processing protein RNA14</fullName>
    </recommendedName>
</protein>